<reference key="1">
    <citation type="submission" date="2009-04" db="EMBL/GenBank/DDBJ databases">
        <title>Study of the expression of bovine sirtuins in different tissues.</title>
        <authorList>
            <person name="Ghinis Y."/>
            <person name="Gonzalez-Davalos L."/>
            <person name="Antaramian A."/>
            <person name="Varela-Echavarria A."/>
            <person name="Shimada A."/>
            <person name="Gonzalez-Gallardo A."/>
            <person name="Hernandez-Sanabria E."/>
            <person name="Ramirez P."/>
            <person name="Mora O."/>
        </authorList>
    </citation>
    <scope>NUCLEOTIDE SEQUENCE [MRNA]</scope>
    <source>
        <tissue>Kidney</tissue>
    </source>
</reference>
<reference key="2">
    <citation type="submission" date="2005-08" db="EMBL/GenBank/DDBJ databases">
        <authorList>
            <consortium name="NIH - Mammalian Gene Collection (MGC) project"/>
        </authorList>
    </citation>
    <scope>NUCLEOTIDE SEQUENCE [LARGE SCALE MRNA]</scope>
    <source>
        <strain>Hereford</strain>
        <tissue>Hypothalamus</tissue>
    </source>
</reference>
<gene>
    <name evidence="2" type="primary">SIRT5</name>
</gene>
<organism>
    <name type="scientific">Bos taurus</name>
    <name type="common">Bovine</name>
    <dbReference type="NCBI Taxonomy" id="9913"/>
    <lineage>
        <taxon>Eukaryota</taxon>
        <taxon>Metazoa</taxon>
        <taxon>Chordata</taxon>
        <taxon>Craniata</taxon>
        <taxon>Vertebrata</taxon>
        <taxon>Euteleostomi</taxon>
        <taxon>Mammalia</taxon>
        <taxon>Eutheria</taxon>
        <taxon>Laurasiatheria</taxon>
        <taxon>Artiodactyla</taxon>
        <taxon>Ruminantia</taxon>
        <taxon>Pecora</taxon>
        <taxon>Bovidae</taxon>
        <taxon>Bovinae</taxon>
        <taxon>Bos</taxon>
    </lineage>
</organism>
<name>SIR5_BOVIN</name>
<comment type="function">
    <text evidence="2">NAD-dependent lysine demalonylase, desuccinylase and deglutarylase that specifically removes malonyl, succinyl and glutaryl groups on target proteins. Activates CPS1 and contributes to the regulation of blood ammonia levels during prolonged fasting: acts by mediating desuccinylation and deglutarylation of CPS1, thereby increasing CPS1 activity in response to elevated NAD levels during fasting. Activates SOD1 by mediating its desuccinylation, leading to reduced reactive oxygen species. Activates SHMT2 by mediating its desuccinylation. Modulates ketogenesis through the desuccinylation and activation of HMGCS2. Has weak NAD-dependent protein deacetylase activity; however this activity may not be physiologically relevant in vivo. Can deacetylate cytochrome c (CYCS) and a number of other proteins in vitro such as UOX.</text>
</comment>
<comment type="catalytic activity">
    <reaction evidence="2">
        <text>N(6)-malonyl-L-lysyl-[protein] + NAD(+) + H2O = 2''-O-malonyl-ADP-D-ribose + nicotinamide + L-lysyl-[protein]</text>
        <dbReference type="Rhea" id="RHEA:47672"/>
        <dbReference type="Rhea" id="RHEA-COMP:9752"/>
        <dbReference type="Rhea" id="RHEA-COMP:11878"/>
        <dbReference type="ChEBI" id="CHEBI:15377"/>
        <dbReference type="ChEBI" id="CHEBI:17154"/>
        <dbReference type="ChEBI" id="CHEBI:29969"/>
        <dbReference type="ChEBI" id="CHEBI:57540"/>
        <dbReference type="ChEBI" id="CHEBI:87831"/>
        <dbReference type="ChEBI" id="CHEBI:87833"/>
    </reaction>
</comment>
<comment type="catalytic activity">
    <reaction evidence="2">
        <text>N(6)-succinyl-L-lysyl-[protein] + NAD(+) + H2O = 2''-O-succinyl-ADP-D-ribose + nicotinamide + L-lysyl-[protein]</text>
        <dbReference type="Rhea" id="RHEA:47668"/>
        <dbReference type="Rhea" id="RHEA-COMP:9752"/>
        <dbReference type="Rhea" id="RHEA-COMP:11877"/>
        <dbReference type="ChEBI" id="CHEBI:15377"/>
        <dbReference type="ChEBI" id="CHEBI:17154"/>
        <dbReference type="ChEBI" id="CHEBI:29969"/>
        <dbReference type="ChEBI" id="CHEBI:57540"/>
        <dbReference type="ChEBI" id="CHEBI:87830"/>
        <dbReference type="ChEBI" id="CHEBI:87832"/>
    </reaction>
</comment>
<comment type="catalytic activity">
    <reaction evidence="2">
        <text>N(6)-glutaryl-L-lysyl-[protein] + NAD(+) + H2O = 2''-O-glutaryl-ADP-D-ribose + nicotinamide + L-lysyl-[protein]</text>
        <dbReference type="Rhea" id="RHEA:47664"/>
        <dbReference type="Rhea" id="RHEA-COMP:9752"/>
        <dbReference type="Rhea" id="RHEA-COMP:11875"/>
        <dbReference type="ChEBI" id="CHEBI:15377"/>
        <dbReference type="ChEBI" id="CHEBI:17154"/>
        <dbReference type="ChEBI" id="CHEBI:29969"/>
        <dbReference type="ChEBI" id="CHEBI:57540"/>
        <dbReference type="ChEBI" id="CHEBI:87828"/>
        <dbReference type="ChEBI" id="CHEBI:87829"/>
    </reaction>
</comment>
<comment type="cofactor">
    <cofactor evidence="2">
        <name>Zn(2+)</name>
        <dbReference type="ChEBI" id="CHEBI:29105"/>
    </cofactor>
    <text evidence="2">Binds 1 zinc ion per subunit.</text>
</comment>
<comment type="subunit">
    <text evidence="1 2">Monomer. Homodimer. Interacts with CPS1. Interacts with PCCA (By similarity).</text>
</comment>
<comment type="subcellular location">
    <subcellularLocation>
        <location evidence="2">Mitochondrion</location>
    </subcellularLocation>
    <subcellularLocation>
        <location evidence="2">Cytoplasm</location>
        <location evidence="2">Cytosol</location>
    </subcellularLocation>
    <subcellularLocation>
        <location evidence="2">Nucleus</location>
    </subcellularLocation>
    <text evidence="2">Mainly mitochondrial. Also present extramitochondrially, with a fraction present in the cytosol and very small amounts also detected in the nucleus.</text>
</comment>
<comment type="domain">
    <text evidence="2">In contrast to class I sirtuins, class III sirtuins have only weak deacetylase activity. Difference in substrate specificity is probably due to a larger hydrophobic pocket with 2 residues (Tyr-102 and Arg-105) that bind to malonylated and succinylated substrates and define the specificity.</text>
</comment>
<comment type="similarity">
    <text evidence="2">Belongs to the sirtuin family. Class III subfamily.</text>
</comment>
<keyword id="KW-0963">Cytoplasm</keyword>
<keyword id="KW-0479">Metal-binding</keyword>
<keyword id="KW-0496">Mitochondrion</keyword>
<keyword id="KW-0520">NAD</keyword>
<keyword id="KW-0539">Nucleus</keyword>
<keyword id="KW-1185">Reference proteome</keyword>
<keyword id="KW-0808">Transferase</keyword>
<keyword id="KW-0809">Transit peptide</keyword>
<keyword id="KW-0862">Zinc</keyword>
<proteinExistence type="evidence at transcript level"/>
<accession>Q3ZBQ0</accession>
<accession>C6K7D6</accession>
<evidence type="ECO:0000250" key="1">
    <source>
        <dbReference type="UniProtKB" id="Q9NXA8"/>
    </source>
</evidence>
<evidence type="ECO:0000255" key="2">
    <source>
        <dbReference type="HAMAP-Rule" id="MF_03160"/>
    </source>
</evidence>
<evidence type="ECO:0000255" key="3">
    <source>
        <dbReference type="PROSITE-ProRule" id="PRU00236"/>
    </source>
</evidence>
<evidence type="ECO:0000305" key="4"/>
<protein>
    <recommendedName>
        <fullName evidence="2">NAD-dependent protein deacylase sirtuin-5, mitochondrial</fullName>
        <ecNumber evidence="2">2.3.1.-</ecNumber>
    </recommendedName>
    <alternativeName>
        <fullName evidence="2">Regulatory protein SIR2 homolog 5</fullName>
    </alternativeName>
    <alternativeName>
        <fullName evidence="2">SIR2-like protein 5</fullName>
    </alternativeName>
</protein>
<sequence>MPPLWIIRNRLFSQLYCGLKSPVSTQTKICLTMARPSSNMADFRKCFAKAKHIVVISGAGISAESGVPTFRGAGGYWRKWKAQDLATPQAFARNPSQVWEFYHYRREVVQSTEPNAGHLAIAECQARLHRQGRQVVVITQNIDELHRKAGTKNLLEIHGSLFKTRCTSCGVVAENYKSPICPALSGKGAPDPQTQDAGIPVEKLPRCEEAGCGGLLRPHVVWFGENLDPAILEEVDKELALCDLCLVVGTSSVVYPAAMFAPQVSARGVPVAEFNMETTPATERFRFHFQGPCGTTLPEALAPHETETVS</sequence>
<feature type="transit peptide" description="Mitochondrion" evidence="2">
    <location>
        <begin position="1"/>
        <end position="36"/>
    </location>
</feature>
<feature type="chain" id="PRO_0000260444" description="NAD-dependent protein deacylase sirtuin-5, mitochondrial">
    <location>
        <begin position="37"/>
        <end position="310"/>
    </location>
</feature>
<feature type="domain" description="Deacetylase sirtuin-type" evidence="3">
    <location>
        <begin position="37"/>
        <end position="307"/>
    </location>
</feature>
<feature type="active site" description="Proton acceptor" evidence="3">
    <location>
        <position position="158"/>
    </location>
</feature>
<feature type="binding site" evidence="2">
    <location>
        <begin position="58"/>
        <end position="77"/>
    </location>
    <ligand>
        <name>NAD(+)</name>
        <dbReference type="ChEBI" id="CHEBI:57540"/>
    </ligand>
</feature>
<feature type="binding site" evidence="2">
    <location>
        <position position="102"/>
    </location>
    <ligand>
        <name>substrate</name>
    </ligand>
</feature>
<feature type="binding site" evidence="2">
    <location>
        <position position="105"/>
    </location>
    <ligand>
        <name>substrate</name>
    </ligand>
</feature>
<feature type="binding site" evidence="2">
    <location>
        <begin position="140"/>
        <end position="143"/>
    </location>
    <ligand>
        <name>NAD(+)</name>
        <dbReference type="ChEBI" id="CHEBI:57540"/>
    </ligand>
</feature>
<feature type="binding site" evidence="2">
    <location>
        <position position="166"/>
    </location>
    <ligand>
        <name>Zn(2+)</name>
        <dbReference type="ChEBI" id="CHEBI:29105"/>
    </ligand>
</feature>
<feature type="binding site" evidence="2">
    <location>
        <position position="169"/>
    </location>
    <ligand>
        <name>Zn(2+)</name>
        <dbReference type="ChEBI" id="CHEBI:29105"/>
    </ligand>
</feature>
<feature type="binding site" evidence="2">
    <location>
        <position position="207"/>
    </location>
    <ligand>
        <name>Zn(2+)</name>
        <dbReference type="ChEBI" id="CHEBI:29105"/>
    </ligand>
</feature>
<feature type="binding site" evidence="2">
    <location>
        <position position="212"/>
    </location>
    <ligand>
        <name>Zn(2+)</name>
        <dbReference type="ChEBI" id="CHEBI:29105"/>
    </ligand>
</feature>
<feature type="binding site" evidence="2">
    <location>
        <begin position="249"/>
        <end position="251"/>
    </location>
    <ligand>
        <name>NAD(+)</name>
        <dbReference type="ChEBI" id="CHEBI:57540"/>
    </ligand>
</feature>
<feature type="binding site" evidence="2">
    <location>
        <begin position="275"/>
        <end position="277"/>
    </location>
    <ligand>
        <name>NAD(+)</name>
        <dbReference type="ChEBI" id="CHEBI:57540"/>
    </ligand>
</feature>
<feature type="binding site" evidence="2">
    <location>
        <position position="293"/>
    </location>
    <ligand>
        <name>NAD(+)</name>
        <dbReference type="ChEBI" id="CHEBI:57540"/>
    </ligand>
</feature>
<feature type="sequence conflict" description="In Ref. 1; ACS66701." evidence="4" ref="1">
    <original>Q</original>
    <variation>K</variation>
    <location>
        <position position="14"/>
    </location>
</feature>
<dbReference type="EC" id="2.3.1.-" evidence="2"/>
<dbReference type="EMBL" id="GQ166651">
    <property type="protein sequence ID" value="ACS66701.1"/>
    <property type="molecule type" value="mRNA"/>
</dbReference>
<dbReference type="EMBL" id="BC103176">
    <property type="protein sequence ID" value="AAI03177.1"/>
    <property type="molecule type" value="mRNA"/>
</dbReference>
<dbReference type="RefSeq" id="NP_001029467.1">
    <property type="nucleotide sequence ID" value="NM_001034295.2"/>
</dbReference>
<dbReference type="RefSeq" id="XP_005223802.1">
    <property type="nucleotide sequence ID" value="XM_005223745.3"/>
</dbReference>
<dbReference type="RefSeq" id="XP_015315433.1">
    <property type="nucleotide sequence ID" value="XM_015459947.3"/>
</dbReference>
<dbReference type="RefSeq" id="XP_015315434.1">
    <property type="nucleotide sequence ID" value="XM_015459948.3"/>
</dbReference>
<dbReference type="RefSeq" id="XP_015315435.1">
    <property type="nucleotide sequence ID" value="XM_015459949.1"/>
</dbReference>
<dbReference type="RefSeq" id="XP_024839244.1">
    <property type="nucleotide sequence ID" value="XM_024983476.2"/>
</dbReference>
<dbReference type="RefSeq" id="XP_059736239.1">
    <property type="nucleotide sequence ID" value="XM_059880256.1"/>
</dbReference>
<dbReference type="RefSeq" id="XP_059736240.1">
    <property type="nucleotide sequence ID" value="XM_059880257.1"/>
</dbReference>
<dbReference type="RefSeq" id="XP_059736242.1">
    <property type="nucleotide sequence ID" value="XM_059880259.1"/>
</dbReference>
<dbReference type="RefSeq" id="XP_059736243.1">
    <property type="nucleotide sequence ID" value="XM_059880260.1"/>
</dbReference>
<dbReference type="RefSeq" id="XP_059736244.1">
    <property type="nucleotide sequence ID" value="XM_059880261.1"/>
</dbReference>
<dbReference type="SMR" id="Q3ZBQ0"/>
<dbReference type="FunCoup" id="Q3ZBQ0">
    <property type="interactions" value="279"/>
</dbReference>
<dbReference type="STRING" id="9913.ENSBTAP00000074135"/>
<dbReference type="PaxDb" id="9913-ENSBTAP00000019842"/>
<dbReference type="PeptideAtlas" id="Q3ZBQ0"/>
<dbReference type="GeneID" id="507347"/>
<dbReference type="KEGG" id="bta:507347"/>
<dbReference type="CTD" id="23408"/>
<dbReference type="VEuPathDB" id="HostDB:ENSBTAG00000014904"/>
<dbReference type="eggNOG" id="KOG2684">
    <property type="taxonomic scope" value="Eukaryota"/>
</dbReference>
<dbReference type="HOGENOM" id="CLU_023643_3_1_1"/>
<dbReference type="InParanoid" id="Q3ZBQ0"/>
<dbReference type="OMA" id="LIHMHGE"/>
<dbReference type="OrthoDB" id="424302at2759"/>
<dbReference type="TreeFam" id="TF106183"/>
<dbReference type="Reactome" id="R-BTA-2151201">
    <property type="pathway name" value="Transcriptional activation of mitochondrial biogenesis"/>
</dbReference>
<dbReference type="Proteomes" id="UP000009136">
    <property type="component" value="Chromosome 23"/>
</dbReference>
<dbReference type="Bgee" id="ENSBTAG00000014904">
    <property type="expression patterns" value="Expressed in temporal cortex and 103 other cell types or tissues"/>
</dbReference>
<dbReference type="GO" id="GO:0005829">
    <property type="term" value="C:cytosol"/>
    <property type="evidence" value="ECO:0000250"/>
    <property type="project" value="UniProtKB"/>
</dbReference>
<dbReference type="GO" id="GO:0005758">
    <property type="term" value="C:mitochondrial intermembrane space"/>
    <property type="evidence" value="ECO:0000250"/>
    <property type="project" value="UniProtKB"/>
</dbReference>
<dbReference type="GO" id="GO:0005759">
    <property type="term" value="C:mitochondrial matrix"/>
    <property type="evidence" value="ECO:0000250"/>
    <property type="project" value="UniProtKB"/>
</dbReference>
<dbReference type="GO" id="GO:0005739">
    <property type="term" value="C:mitochondrion"/>
    <property type="evidence" value="ECO:0000250"/>
    <property type="project" value="UniProtKB"/>
</dbReference>
<dbReference type="GO" id="GO:0005634">
    <property type="term" value="C:nucleus"/>
    <property type="evidence" value="ECO:0000318"/>
    <property type="project" value="GO_Central"/>
</dbReference>
<dbReference type="GO" id="GO:0017136">
    <property type="term" value="F:histone deacetylase activity, NAD-dependent"/>
    <property type="evidence" value="ECO:0000318"/>
    <property type="project" value="GO_Central"/>
</dbReference>
<dbReference type="GO" id="GO:0070403">
    <property type="term" value="F:NAD+ binding"/>
    <property type="evidence" value="ECO:0000250"/>
    <property type="project" value="UniProtKB"/>
</dbReference>
<dbReference type="GO" id="GO:0061697">
    <property type="term" value="F:protein-glutaryllysine deglutarylase activity"/>
    <property type="evidence" value="ECO:0000318"/>
    <property type="project" value="GO_Central"/>
</dbReference>
<dbReference type="GO" id="GO:0036054">
    <property type="term" value="F:protein-malonyllysine demalonylase activity"/>
    <property type="evidence" value="ECO:0000250"/>
    <property type="project" value="UniProtKB"/>
</dbReference>
<dbReference type="GO" id="GO:0036055">
    <property type="term" value="F:protein-succinyllysine desuccinylase activity"/>
    <property type="evidence" value="ECO:0000250"/>
    <property type="project" value="UniProtKB"/>
</dbReference>
<dbReference type="GO" id="GO:0008270">
    <property type="term" value="F:zinc ion binding"/>
    <property type="evidence" value="ECO:0000250"/>
    <property type="project" value="UniProtKB"/>
</dbReference>
<dbReference type="GO" id="GO:0036047">
    <property type="term" value="P:peptidyl-lysine demalonylation"/>
    <property type="evidence" value="ECO:0000250"/>
    <property type="project" value="UniProtKB"/>
</dbReference>
<dbReference type="GO" id="GO:0036049">
    <property type="term" value="P:peptidyl-lysine desuccinylation"/>
    <property type="evidence" value="ECO:0000250"/>
    <property type="project" value="UniProtKB"/>
</dbReference>
<dbReference type="GO" id="GO:0036046">
    <property type="term" value="P:protein demalonylation"/>
    <property type="evidence" value="ECO:0000250"/>
    <property type="project" value="UniProtKB"/>
</dbReference>
<dbReference type="GO" id="GO:0036048">
    <property type="term" value="P:protein desuccinylation"/>
    <property type="evidence" value="ECO:0000250"/>
    <property type="project" value="UniProtKB"/>
</dbReference>
<dbReference type="GO" id="GO:0010566">
    <property type="term" value="P:regulation of ketone biosynthetic process"/>
    <property type="evidence" value="ECO:0000250"/>
    <property type="project" value="UniProtKB"/>
</dbReference>
<dbReference type="CDD" id="cd01412">
    <property type="entry name" value="SIRT5_Af1_CobB"/>
    <property type="match status" value="1"/>
</dbReference>
<dbReference type="FunFam" id="3.30.1600.10:FF:000005">
    <property type="entry name" value="NAD-dependent protein deacylase sirtuin-5, mitochondrial"/>
    <property type="match status" value="1"/>
</dbReference>
<dbReference type="Gene3D" id="3.30.1600.10">
    <property type="entry name" value="SIR2/SIRT2 'Small Domain"/>
    <property type="match status" value="1"/>
</dbReference>
<dbReference type="Gene3D" id="3.40.50.1220">
    <property type="entry name" value="TPP-binding domain"/>
    <property type="match status" value="1"/>
</dbReference>
<dbReference type="HAMAP" id="MF_01121">
    <property type="entry name" value="Sirtuin_ClassIII"/>
    <property type="match status" value="1"/>
</dbReference>
<dbReference type="InterPro" id="IPR029035">
    <property type="entry name" value="DHS-like_NAD/FAD-binding_dom"/>
</dbReference>
<dbReference type="InterPro" id="IPR050134">
    <property type="entry name" value="NAD-dep_sirtuin_deacylases"/>
</dbReference>
<dbReference type="InterPro" id="IPR003000">
    <property type="entry name" value="Sirtuin"/>
</dbReference>
<dbReference type="InterPro" id="IPR026591">
    <property type="entry name" value="Sirtuin_cat_small_dom_sf"/>
</dbReference>
<dbReference type="InterPro" id="IPR027546">
    <property type="entry name" value="Sirtuin_class_III"/>
</dbReference>
<dbReference type="InterPro" id="IPR026590">
    <property type="entry name" value="Ssirtuin_cat_dom"/>
</dbReference>
<dbReference type="NCBIfam" id="NF001753">
    <property type="entry name" value="PRK00481.1-3"/>
    <property type="match status" value="1"/>
</dbReference>
<dbReference type="PANTHER" id="PTHR11085">
    <property type="entry name" value="NAD-DEPENDENT PROTEIN DEACYLASE SIRTUIN-5, MITOCHONDRIAL-RELATED"/>
    <property type="match status" value="1"/>
</dbReference>
<dbReference type="PANTHER" id="PTHR11085:SF10">
    <property type="entry name" value="NAD-DEPENDENT PROTEIN DEACYLASE SIRTUIN-5, MITOCHONDRIAL-RELATED"/>
    <property type="match status" value="1"/>
</dbReference>
<dbReference type="Pfam" id="PF02146">
    <property type="entry name" value="SIR2"/>
    <property type="match status" value="1"/>
</dbReference>
<dbReference type="SUPFAM" id="SSF52467">
    <property type="entry name" value="DHS-like NAD/FAD-binding domain"/>
    <property type="match status" value="1"/>
</dbReference>
<dbReference type="PROSITE" id="PS50305">
    <property type="entry name" value="SIRTUIN"/>
    <property type="match status" value="1"/>
</dbReference>